<accession>M4MEY9</accession>
<gene>
    <name evidence="7" type="primary">XynC</name>
    <name evidence="8" type="synonym">Xyl3</name>
    <name evidence="7" type="synonym">XynW</name>
</gene>
<proteinExistence type="evidence at protein level"/>
<feature type="signal peptide" evidence="1">
    <location>
        <begin position="1"/>
        <end position="16"/>
    </location>
</feature>
<feature type="chain" id="PRO_5004055383" description="Endo-1,4-beta-xylanase C">
    <location>
        <begin position="17"/>
        <end position="390"/>
    </location>
</feature>
<feature type="domain" description="CBM1" evidence="2">
    <location>
        <begin position="17"/>
        <end position="52"/>
    </location>
</feature>
<feature type="domain" description="GH10" evidence="3">
    <location>
        <begin position="85"/>
        <end position="389"/>
    </location>
</feature>
<feature type="region of interest" description="Disordered" evidence="4">
    <location>
        <begin position="55"/>
        <end position="92"/>
    </location>
</feature>
<feature type="compositionally biased region" description="Pro residues" evidence="4">
    <location>
        <begin position="59"/>
        <end position="82"/>
    </location>
</feature>
<feature type="active site" description="Proton donor" evidence="3">
    <location>
        <position position="216"/>
    </location>
</feature>
<feature type="active site" description="Nucleophile" evidence="3">
    <location>
        <position position="326"/>
    </location>
</feature>
<sequence>MRSIALALAAAPAVLAQSQLWGQCGGIGWNGPTTCVSGATCTKINDWYHQCLPGGNNNNPPPATTSQWTPPPAQTSSNPPPNNGGGGGNTLHEKFKARGKQYFGTEIDHYHLNNNQLMEIARREFGQITHENSMKWDATEPSRGSFSFGNADRVVDWATSNGKLIRGHTLLWHSQLPQWVQNINDRNTLTQVIENHVKTIMTRYKGKIFHYDVVNEILDENGGLRNSVFSRVLGEDFVGIAFRAARATDPDAKLYINDYNLDSANYAKTRGMINLVNKWVSQGVPIDGIGTQAHLAGPGGWNPASGVPAALQALAGANVKEVAITELDIQGAGANDYVTVANACLNVQKCVGITVWGVSDRDSWRSNENPLLYDGSYRPKAAYNALMNAL</sequence>
<comment type="function">
    <text evidence="5">Endo-1,4-beta-xylanase involved in the hydrolysis of xylan, a major structural heterogeneous polysaccharide found in plant biomass representing the second most abundant polysaccharide in the biosphere, after cellulose (PubMed:23306124). Is more active on soluble wheat arabinoxylan (defined as 100%) than on birchwood xylan (72.4%) and beechwood xylan (665.3%), and less active on insoluble wheat arabinoxylan (39.3%) (PubMed:23306124). The major hydrolysis products of XynC are mainly consisting of xylobiose and xylotriose with a small amount of xylose (PubMed:23306124).</text>
</comment>
<comment type="catalytic activity">
    <reaction evidence="5">
        <text>Endohydrolysis of (1-&gt;4)-beta-D-xylosidic linkages in xylans.</text>
        <dbReference type="EC" id="3.2.1.8"/>
    </reaction>
</comment>
<comment type="activity regulation">
    <text evidence="5">Partial inhibition of activity is detected in the presence of Ag(+), Cu2(+) and SDS. Like most fungal xylanases, activity is completely inhibited by Hg(2+) since Hg(2+) could interact with tryptophan residues and oxidize the indole ring (PubMed:23306124). Beta-mercaptoethanol enhances the enzymatic activity by counteracting the oxidation effects of the S-S linkage between cysteine residues (PubMed:23306124).</text>
</comment>
<comment type="biophysicochemical properties">
    <kinetics>
        <KM evidence="5">2.1 mM for birchwood xylan</KM>
        <Vmax evidence="5">287.7 umol/min/mg enzyme towards birchwood xylan</Vmax>
    </kinetics>
    <phDependence>
        <text evidence="5">Optimum pH is 6.0.</text>
    </phDependence>
    <temperatureDependence>
        <text evidence="5">Optimum temperature is 70 degrees Celsius.</text>
    </temperatureDependence>
</comment>
<comment type="subcellular location">
    <subcellularLocation>
        <location evidence="10">Secreted</location>
    </subcellularLocation>
</comment>
<comment type="induction">
    <text evidence="6">Expression is inhibited by the transcription factor CreA in the presence of glucose.</text>
</comment>
<comment type="biotechnology">
    <text evidence="5">Considering the detergent and textile solutions that are neutral to alkaline and must be tolerant to high temperatures and SDS, the three xylanases XynA, XynB and XynC having such favorable properties might represent potential candidates in the detergent and textile industries (PubMed:23306124). Together with their wide substrate specificities, the XynA, XynB and XynC thermophilic xylanases could also be of considerable commercial interest in various other industries, especially in the brewing industry (PubMed:23306124).</text>
</comment>
<comment type="similarity">
    <text evidence="9">Belongs to the glycosyl hydrolase 10 (cellulase F) family.</text>
</comment>
<evidence type="ECO:0000255" key="1"/>
<evidence type="ECO:0000255" key="2">
    <source>
        <dbReference type="PROSITE-ProRule" id="PRU00597"/>
    </source>
</evidence>
<evidence type="ECO:0000255" key="3">
    <source>
        <dbReference type="PROSITE-ProRule" id="PRU01096"/>
    </source>
</evidence>
<evidence type="ECO:0000256" key="4">
    <source>
        <dbReference type="SAM" id="MobiDB-lite"/>
    </source>
</evidence>
<evidence type="ECO:0000269" key="5">
    <source>
    </source>
</evidence>
<evidence type="ECO:0000269" key="6">
    <source>
    </source>
</evidence>
<evidence type="ECO:0000303" key="7">
    <source>
    </source>
</evidence>
<evidence type="ECO:0000303" key="8">
    <source>
    </source>
</evidence>
<evidence type="ECO:0000305" key="9"/>
<evidence type="ECO:0000305" key="10">
    <source>
    </source>
</evidence>
<protein>
    <recommendedName>
        <fullName evidence="7">Endo-1,4-beta-xylanase C</fullName>
        <ecNumber evidence="5">3.2.1.8</ecNumber>
    </recommendedName>
    <alternativeName>
        <fullName evidence="9">1,4-beta-D-xylan xylanohydrolase C</fullName>
    </alternativeName>
</protein>
<organism>
    <name type="scientific">Humicola insolens</name>
    <name type="common">Soft-rot fungus</name>
    <dbReference type="NCBI Taxonomy" id="85995"/>
    <lineage>
        <taxon>Eukaryota</taxon>
        <taxon>Fungi</taxon>
        <taxon>Dikarya</taxon>
        <taxon>Ascomycota</taxon>
        <taxon>Pezizomycotina</taxon>
        <taxon>Sordariomycetes</taxon>
        <taxon>Sordariomycetidae</taxon>
        <taxon>Sordariales</taxon>
        <taxon>Chaetomiaceae</taxon>
        <taxon>Mycothermus</taxon>
    </lineage>
</organism>
<name>XYNC_HUMIN</name>
<keyword id="KW-0119">Carbohydrate metabolism</keyword>
<keyword id="KW-0326">Glycosidase</keyword>
<keyword id="KW-0378">Hydrolase</keyword>
<keyword id="KW-0624">Polysaccharide degradation</keyword>
<keyword id="KW-0964">Secreted</keyword>
<keyword id="KW-0732">Signal</keyword>
<dbReference type="EC" id="3.2.1.8" evidence="5"/>
<dbReference type="EMBL" id="JX543530">
    <property type="protein sequence ID" value="AGG68961.1"/>
    <property type="molecule type" value="mRNA"/>
</dbReference>
<dbReference type="GO" id="GO:0005576">
    <property type="term" value="C:extracellular region"/>
    <property type="evidence" value="ECO:0007669"/>
    <property type="project" value="UniProtKB-SubCell"/>
</dbReference>
<dbReference type="GO" id="GO:0030248">
    <property type="term" value="F:cellulose binding"/>
    <property type="evidence" value="ECO:0007669"/>
    <property type="project" value="InterPro"/>
</dbReference>
<dbReference type="GO" id="GO:0031176">
    <property type="term" value="F:endo-1,4-beta-xylanase activity"/>
    <property type="evidence" value="ECO:0007669"/>
    <property type="project" value="UniProtKB-EC"/>
</dbReference>
<dbReference type="GO" id="GO:0000272">
    <property type="term" value="P:polysaccharide catabolic process"/>
    <property type="evidence" value="ECO:0007669"/>
    <property type="project" value="UniProtKB-KW"/>
</dbReference>
<dbReference type="Gene3D" id="3.20.20.80">
    <property type="entry name" value="Glycosidases"/>
    <property type="match status" value="1"/>
</dbReference>
<dbReference type="InterPro" id="IPR035971">
    <property type="entry name" value="CBD_sf"/>
</dbReference>
<dbReference type="InterPro" id="IPR000254">
    <property type="entry name" value="Cellulose-bd_dom_fun"/>
</dbReference>
<dbReference type="InterPro" id="IPR044846">
    <property type="entry name" value="GH10"/>
</dbReference>
<dbReference type="InterPro" id="IPR001000">
    <property type="entry name" value="GH10_dom"/>
</dbReference>
<dbReference type="InterPro" id="IPR017853">
    <property type="entry name" value="Glycoside_hydrolase_SF"/>
</dbReference>
<dbReference type="PANTHER" id="PTHR31490:SF76">
    <property type="entry name" value="ENDO-1,4-BETA-XYLANASE C"/>
    <property type="match status" value="1"/>
</dbReference>
<dbReference type="PANTHER" id="PTHR31490">
    <property type="entry name" value="GLYCOSYL HYDROLASE"/>
    <property type="match status" value="1"/>
</dbReference>
<dbReference type="Pfam" id="PF00734">
    <property type="entry name" value="CBM_1"/>
    <property type="match status" value="1"/>
</dbReference>
<dbReference type="Pfam" id="PF00331">
    <property type="entry name" value="Glyco_hydro_10"/>
    <property type="match status" value="1"/>
</dbReference>
<dbReference type="PRINTS" id="PR00134">
    <property type="entry name" value="GLHYDRLASE10"/>
</dbReference>
<dbReference type="SMART" id="SM00236">
    <property type="entry name" value="fCBD"/>
    <property type="match status" value="1"/>
</dbReference>
<dbReference type="SMART" id="SM00633">
    <property type="entry name" value="Glyco_10"/>
    <property type="match status" value="1"/>
</dbReference>
<dbReference type="SUPFAM" id="SSF51445">
    <property type="entry name" value="(Trans)glycosidases"/>
    <property type="match status" value="1"/>
</dbReference>
<dbReference type="SUPFAM" id="SSF57180">
    <property type="entry name" value="Cellulose-binding domain"/>
    <property type="match status" value="1"/>
</dbReference>
<dbReference type="PROSITE" id="PS00562">
    <property type="entry name" value="CBM1_1"/>
    <property type="match status" value="1"/>
</dbReference>
<dbReference type="PROSITE" id="PS51164">
    <property type="entry name" value="CBM1_2"/>
    <property type="match status" value="1"/>
</dbReference>
<dbReference type="PROSITE" id="PS51760">
    <property type="entry name" value="GH10_2"/>
    <property type="match status" value="1"/>
</dbReference>
<reference key="1">
    <citation type="journal article" date="2013" name="Bioresour. Technol.">
        <title>Characterization of three novel thermophilic xylanases from Humicola insolens Y1 with application potentials in the brewing industry.</title>
        <authorList>
            <person name="Du Y."/>
            <person name="Shi P."/>
            <person name="Huang H."/>
            <person name="Zhang X."/>
            <person name="Luo H."/>
            <person name="Wang Y."/>
            <person name="Yao B."/>
        </authorList>
    </citation>
    <scope>NUCLEOTIDE SEQUENCE [MRNA]</scope>
    <scope>FUNCTION</scope>
    <scope>CATALYTIC ACTIVITY</scope>
    <scope>BIOPHYSICOCHEMICAL PROPERTIES</scope>
    <scope>SUBSTRATE SPECIFICITY</scope>
    <scope>ACTIVITY REGULATION</scope>
    <scope>BIOTECHNOLOGY</scope>
    <source>
        <strain>Y1</strain>
    </source>
</reference>
<reference key="2">
    <citation type="journal article" date="1994" name="Mol. Gen. Genet.">
        <title>A novel method for efficient expression cloning of fungal enzyme genes.</title>
        <authorList>
            <person name="Dalboege H."/>
            <person name="Hansen H.P.H."/>
        </authorList>
    </citation>
    <scope>IDENTIFICATION</scope>
</reference>
<reference key="3">
    <citation type="journal article" date="2019" name="Int. J. Mol. Sci.">
        <title>A novel CreA-mediated regulation mechanism of cellulase expression in the thermophilic fungus Humicola insolens.</title>
        <authorList>
            <person name="Xu X."/>
            <person name="Fan C."/>
            <person name="Song L."/>
            <person name="Li J."/>
            <person name="Chen Y."/>
            <person name="Zhang Y."/>
            <person name="Liu B."/>
            <person name="Zhang W."/>
        </authorList>
    </citation>
    <scope>INDUCTION</scope>
</reference>